<name>ZN846_HUMAN</name>
<evidence type="ECO:0000250" key="1"/>
<evidence type="ECO:0000255" key="2">
    <source>
        <dbReference type="PROSITE-ProRule" id="PRU00042"/>
    </source>
</evidence>
<evidence type="ECO:0000255" key="3">
    <source>
        <dbReference type="PROSITE-ProRule" id="PRU00119"/>
    </source>
</evidence>
<evidence type="ECO:0000303" key="4">
    <source>
    </source>
</evidence>
<evidence type="ECO:0000305" key="5"/>
<keyword id="KW-0025">Alternative splicing</keyword>
<keyword id="KW-0238">DNA-binding</keyword>
<keyword id="KW-0479">Metal-binding</keyword>
<keyword id="KW-0539">Nucleus</keyword>
<keyword id="KW-1267">Proteomics identification</keyword>
<keyword id="KW-1185">Reference proteome</keyword>
<keyword id="KW-0677">Repeat</keyword>
<keyword id="KW-0804">Transcription</keyword>
<keyword id="KW-0805">Transcription regulation</keyword>
<keyword id="KW-0862">Zinc</keyword>
<keyword id="KW-0863">Zinc-finger</keyword>
<feature type="chain" id="PRO_0000332245" description="Zinc finger protein 846">
    <location>
        <begin position="1"/>
        <end position="533"/>
    </location>
</feature>
<feature type="domain" description="KRAB" evidence="3">
    <location>
        <begin position="8"/>
        <end position="80"/>
    </location>
</feature>
<feature type="zinc finger region" description="C2H2-type 1; degenerate" evidence="2">
    <location>
        <begin position="114"/>
        <end position="136"/>
    </location>
</feature>
<feature type="zinc finger region" description="C2H2-type 2; degenerate" evidence="2">
    <location>
        <begin position="170"/>
        <end position="192"/>
    </location>
</feature>
<feature type="zinc finger region" description="C2H2-type 3" evidence="2">
    <location>
        <begin position="198"/>
        <end position="220"/>
    </location>
</feature>
<feature type="zinc finger region" description="C2H2-type 4" evidence="2">
    <location>
        <begin position="226"/>
        <end position="248"/>
    </location>
</feature>
<feature type="zinc finger region" description="C2H2-type 5" evidence="2">
    <location>
        <begin position="254"/>
        <end position="276"/>
    </location>
</feature>
<feature type="zinc finger region" description="C2H2-type 6" evidence="2">
    <location>
        <begin position="282"/>
        <end position="304"/>
    </location>
</feature>
<feature type="zinc finger region" description="C2H2-type 7" evidence="2">
    <location>
        <begin position="310"/>
        <end position="332"/>
    </location>
</feature>
<feature type="zinc finger region" description="C2H2-type 8" evidence="2">
    <location>
        <begin position="338"/>
        <end position="360"/>
    </location>
</feature>
<feature type="zinc finger region" description="C2H2-type 9" evidence="2">
    <location>
        <begin position="366"/>
        <end position="388"/>
    </location>
</feature>
<feature type="zinc finger region" description="C2H2-type 10" evidence="2">
    <location>
        <begin position="394"/>
        <end position="416"/>
    </location>
</feature>
<feature type="zinc finger region" description="C2H2-type 11" evidence="2">
    <location>
        <begin position="422"/>
        <end position="444"/>
    </location>
</feature>
<feature type="zinc finger region" description="C2H2-type 12" evidence="2">
    <location>
        <begin position="450"/>
        <end position="472"/>
    </location>
</feature>
<feature type="zinc finger region" description="C2H2-type 13" evidence="2">
    <location>
        <begin position="478"/>
        <end position="500"/>
    </location>
</feature>
<feature type="zinc finger region" description="C2H2-type 14; degenerate" evidence="2">
    <location>
        <begin position="506"/>
        <end position="528"/>
    </location>
</feature>
<feature type="splice variant" id="VSP_033362" description="In isoform 2." evidence="4">
    <location>
        <begin position="1"/>
        <end position="129"/>
    </location>
</feature>
<feature type="splice variant" id="VSP_033363" description="In isoform 2." evidence="4">
    <location>
        <begin position="340"/>
        <end position="533"/>
    </location>
</feature>
<feature type="sequence variant" id="VAR_052911" description="In dbSNP:rs10414485.">
    <original>C</original>
    <variation>Y</variation>
    <location>
        <position position="450"/>
    </location>
</feature>
<feature type="sequence variant" id="VAR_052912" description="In dbSNP:rs10420364.">
    <original>Y</original>
    <variation>C</variation>
    <location>
        <position position="492"/>
    </location>
</feature>
<sequence>MDSSQHLVTFEDVAVDFTQEEWTLLDQAQRDLYRDVMLENYKNLIILAGSELFKRSLMSGLEQMEELRTGVTGVLQELDLQLKTKGSPLLQDISAERSPNGVQLERSNTAEKLYDSNHSGKVFNEHPFLMTHMITHIGEKTSEDNQSGKALRKNFPHSFYKKSHAEGKMPKCVKHEKAFNQFPNLTRQNKTHTQEKLCECKDCWRTFLNQSSLKLHIRSHNGDKHYVCKECGKAFSNSSHLIGHGRIHSGEKPYVCKECGKAFTQSTGLKLHIRTHSGEKPYKCKECGKAFTHSSYLTDHTRIHSGKKPYVCMECGKAFTRSTGLILHMRIHTGEKPYECKECGKAFIHSSYLTKHVRIHSGEKLYLCKACGKAFTRSSGLVLHMRTHTGEKPYECKECGKAFNNSSMLSQHVRIHTGEKPYECKECGKAFTQSSGLSTHLRTHTGEKACECKECGKAFARSTNLNMHMRTHTGEKPYACKECGKAFRYSTYLNVHTRTHTGAKPYECKKCGKNFTQSSALAKHLRTKACEKT</sequence>
<gene>
    <name type="primary">ZNF846</name>
</gene>
<accession>Q147U1</accession>
<accession>A8K0H1</accession>
<accession>B3KUP1</accession>
<reference key="1">
    <citation type="journal article" date="2004" name="Nat. Genet.">
        <title>Complete sequencing and characterization of 21,243 full-length human cDNAs.</title>
        <authorList>
            <person name="Ota T."/>
            <person name="Suzuki Y."/>
            <person name="Nishikawa T."/>
            <person name="Otsuki T."/>
            <person name="Sugiyama T."/>
            <person name="Irie R."/>
            <person name="Wakamatsu A."/>
            <person name="Hayashi K."/>
            <person name="Sato H."/>
            <person name="Nagai K."/>
            <person name="Kimura K."/>
            <person name="Makita H."/>
            <person name="Sekine M."/>
            <person name="Obayashi M."/>
            <person name="Nishi T."/>
            <person name="Shibahara T."/>
            <person name="Tanaka T."/>
            <person name="Ishii S."/>
            <person name="Yamamoto J."/>
            <person name="Saito K."/>
            <person name="Kawai Y."/>
            <person name="Isono Y."/>
            <person name="Nakamura Y."/>
            <person name="Nagahari K."/>
            <person name="Murakami K."/>
            <person name="Yasuda T."/>
            <person name="Iwayanagi T."/>
            <person name="Wagatsuma M."/>
            <person name="Shiratori A."/>
            <person name="Sudo H."/>
            <person name="Hosoiri T."/>
            <person name="Kaku Y."/>
            <person name="Kodaira H."/>
            <person name="Kondo H."/>
            <person name="Sugawara M."/>
            <person name="Takahashi M."/>
            <person name="Kanda K."/>
            <person name="Yokoi T."/>
            <person name="Furuya T."/>
            <person name="Kikkawa E."/>
            <person name="Omura Y."/>
            <person name="Abe K."/>
            <person name="Kamihara K."/>
            <person name="Katsuta N."/>
            <person name="Sato K."/>
            <person name="Tanikawa M."/>
            <person name="Yamazaki M."/>
            <person name="Ninomiya K."/>
            <person name="Ishibashi T."/>
            <person name="Yamashita H."/>
            <person name="Murakawa K."/>
            <person name="Fujimori K."/>
            <person name="Tanai H."/>
            <person name="Kimata M."/>
            <person name="Watanabe M."/>
            <person name="Hiraoka S."/>
            <person name="Chiba Y."/>
            <person name="Ishida S."/>
            <person name="Ono Y."/>
            <person name="Takiguchi S."/>
            <person name="Watanabe S."/>
            <person name="Yosida M."/>
            <person name="Hotuta T."/>
            <person name="Kusano J."/>
            <person name="Kanehori K."/>
            <person name="Takahashi-Fujii A."/>
            <person name="Hara H."/>
            <person name="Tanase T.-O."/>
            <person name="Nomura Y."/>
            <person name="Togiya S."/>
            <person name="Komai F."/>
            <person name="Hara R."/>
            <person name="Takeuchi K."/>
            <person name="Arita M."/>
            <person name="Imose N."/>
            <person name="Musashino K."/>
            <person name="Yuuki H."/>
            <person name="Oshima A."/>
            <person name="Sasaki N."/>
            <person name="Aotsuka S."/>
            <person name="Yoshikawa Y."/>
            <person name="Matsunawa H."/>
            <person name="Ichihara T."/>
            <person name="Shiohata N."/>
            <person name="Sano S."/>
            <person name="Moriya S."/>
            <person name="Momiyama H."/>
            <person name="Satoh N."/>
            <person name="Takami S."/>
            <person name="Terashima Y."/>
            <person name="Suzuki O."/>
            <person name="Nakagawa S."/>
            <person name="Senoh A."/>
            <person name="Mizoguchi H."/>
            <person name="Goto Y."/>
            <person name="Shimizu F."/>
            <person name="Wakebe H."/>
            <person name="Hishigaki H."/>
            <person name="Watanabe T."/>
            <person name="Sugiyama A."/>
            <person name="Takemoto M."/>
            <person name="Kawakami B."/>
            <person name="Yamazaki M."/>
            <person name="Watanabe K."/>
            <person name="Kumagai A."/>
            <person name="Itakura S."/>
            <person name="Fukuzumi Y."/>
            <person name="Fujimori Y."/>
            <person name="Komiyama M."/>
            <person name="Tashiro H."/>
            <person name="Tanigami A."/>
            <person name="Fujiwara T."/>
            <person name="Ono T."/>
            <person name="Yamada K."/>
            <person name="Fujii Y."/>
            <person name="Ozaki K."/>
            <person name="Hirao M."/>
            <person name="Ohmori Y."/>
            <person name="Kawabata A."/>
            <person name="Hikiji T."/>
            <person name="Kobatake N."/>
            <person name="Inagaki H."/>
            <person name="Ikema Y."/>
            <person name="Okamoto S."/>
            <person name="Okitani R."/>
            <person name="Kawakami T."/>
            <person name="Noguchi S."/>
            <person name="Itoh T."/>
            <person name="Shigeta K."/>
            <person name="Senba T."/>
            <person name="Matsumura K."/>
            <person name="Nakajima Y."/>
            <person name="Mizuno T."/>
            <person name="Morinaga M."/>
            <person name="Sasaki M."/>
            <person name="Togashi T."/>
            <person name="Oyama M."/>
            <person name="Hata H."/>
            <person name="Watanabe M."/>
            <person name="Komatsu T."/>
            <person name="Mizushima-Sugano J."/>
            <person name="Satoh T."/>
            <person name="Shirai Y."/>
            <person name="Takahashi Y."/>
            <person name="Nakagawa K."/>
            <person name="Okumura K."/>
            <person name="Nagase T."/>
            <person name="Nomura N."/>
            <person name="Kikuchi H."/>
            <person name="Masuho Y."/>
            <person name="Yamashita R."/>
            <person name="Nakai K."/>
            <person name="Yada T."/>
            <person name="Nakamura Y."/>
            <person name="Ohara O."/>
            <person name="Isogai T."/>
            <person name="Sugano S."/>
        </authorList>
    </citation>
    <scope>NUCLEOTIDE SEQUENCE [LARGE SCALE MRNA] (ISOFORM 2)</scope>
    <source>
        <tissue>Cerebellum</tissue>
        <tissue>Testis</tissue>
    </source>
</reference>
<reference key="2">
    <citation type="journal article" date="2004" name="Nature">
        <title>The DNA sequence and biology of human chromosome 19.</title>
        <authorList>
            <person name="Grimwood J."/>
            <person name="Gordon L.A."/>
            <person name="Olsen A.S."/>
            <person name="Terry A."/>
            <person name="Schmutz J."/>
            <person name="Lamerdin J.E."/>
            <person name="Hellsten U."/>
            <person name="Goodstein D."/>
            <person name="Couronne O."/>
            <person name="Tran-Gyamfi M."/>
            <person name="Aerts A."/>
            <person name="Altherr M."/>
            <person name="Ashworth L."/>
            <person name="Bajorek E."/>
            <person name="Black S."/>
            <person name="Branscomb E."/>
            <person name="Caenepeel S."/>
            <person name="Carrano A.V."/>
            <person name="Caoile C."/>
            <person name="Chan Y.M."/>
            <person name="Christensen M."/>
            <person name="Cleland C.A."/>
            <person name="Copeland A."/>
            <person name="Dalin E."/>
            <person name="Dehal P."/>
            <person name="Denys M."/>
            <person name="Detter J.C."/>
            <person name="Escobar J."/>
            <person name="Flowers D."/>
            <person name="Fotopulos D."/>
            <person name="Garcia C."/>
            <person name="Georgescu A.M."/>
            <person name="Glavina T."/>
            <person name="Gomez M."/>
            <person name="Gonzales E."/>
            <person name="Groza M."/>
            <person name="Hammon N."/>
            <person name="Hawkins T."/>
            <person name="Haydu L."/>
            <person name="Ho I."/>
            <person name="Huang W."/>
            <person name="Israni S."/>
            <person name="Jett J."/>
            <person name="Kadner K."/>
            <person name="Kimball H."/>
            <person name="Kobayashi A."/>
            <person name="Larionov V."/>
            <person name="Leem S.-H."/>
            <person name="Lopez F."/>
            <person name="Lou Y."/>
            <person name="Lowry S."/>
            <person name="Malfatti S."/>
            <person name="Martinez D."/>
            <person name="McCready P.M."/>
            <person name="Medina C."/>
            <person name="Morgan J."/>
            <person name="Nelson K."/>
            <person name="Nolan M."/>
            <person name="Ovcharenko I."/>
            <person name="Pitluck S."/>
            <person name="Pollard M."/>
            <person name="Popkie A.P."/>
            <person name="Predki P."/>
            <person name="Quan G."/>
            <person name="Ramirez L."/>
            <person name="Rash S."/>
            <person name="Retterer J."/>
            <person name="Rodriguez A."/>
            <person name="Rogers S."/>
            <person name="Salamov A."/>
            <person name="Salazar A."/>
            <person name="She X."/>
            <person name="Smith D."/>
            <person name="Slezak T."/>
            <person name="Solovyev V."/>
            <person name="Thayer N."/>
            <person name="Tice H."/>
            <person name="Tsai M."/>
            <person name="Ustaszewska A."/>
            <person name="Vo N."/>
            <person name="Wagner M."/>
            <person name="Wheeler J."/>
            <person name="Wu K."/>
            <person name="Xie G."/>
            <person name="Yang J."/>
            <person name="Dubchak I."/>
            <person name="Furey T.S."/>
            <person name="DeJong P."/>
            <person name="Dickson M."/>
            <person name="Gordon D."/>
            <person name="Eichler E.E."/>
            <person name="Pennacchio L.A."/>
            <person name="Richardson P."/>
            <person name="Stubbs L."/>
            <person name="Rokhsar D.S."/>
            <person name="Myers R.M."/>
            <person name="Rubin E.M."/>
            <person name="Lucas S.M."/>
        </authorList>
    </citation>
    <scope>NUCLEOTIDE SEQUENCE [LARGE SCALE GENOMIC DNA]</scope>
</reference>
<reference key="3">
    <citation type="journal article" date="2004" name="Genome Res.">
        <title>The status, quality, and expansion of the NIH full-length cDNA project: the Mammalian Gene Collection (MGC).</title>
        <authorList>
            <consortium name="The MGC Project Team"/>
        </authorList>
    </citation>
    <scope>NUCLEOTIDE SEQUENCE [LARGE SCALE MRNA] (ISOFORM 1)</scope>
</reference>
<reference key="4">
    <citation type="journal article" date="2008" name="Proc. Natl. Acad. Sci. U.S.A.">
        <title>A quantitative atlas of mitotic phosphorylation.</title>
        <authorList>
            <person name="Dephoure N."/>
            <person name="Zhou C."/>
            <person name="Villen J."/>
            <person name="Beausoleil S.A."/>
            <person name="Bakalarski C.E."/>
            <person name="Elledge S.J."/>
            <person name="Gygi S.P."/>
        </authorList>
    </citation>
    <scope>IDENTIFICATION BY MASS SPECTROMETRY [LARGE SCALE ANALYSIS]</scope>
    <source>
        <tissue>Cervix carcinoma</tissue>
    </source>
</reference>
<protein>
    <recommendedName>
        <fullName>Zinc finger protein 846</fullName>
    </recommendedName>
</protein>
<comment type="function">
    <text evidence="1">May be involved in transcriptional regulation.</text>
</comment>
<comment type="interaction">
    <interactant intactId="EBI-10234020">
        <id>Q147U1</id>
    </interactant>
    <interactant intactId="EBI-10172290">
        <id>P60409</id>
        <label>KRTAP10-7</label>
    </interactant>
    <organismsDiffer>false</organismsDiffer>
    <experiments>3</experiments>
</comment>
<comment type="subcellular location">
    <subcellularLocation>
        <location evidence="1">Nucleus</location>
    </subcellularLocation>
</comment>
<comment type="alternative products">
    <event type="alternative splicing"/>
    <isoform>
        <id>Q147U1-1</id>
        <name>1</name>
        <sequence type="displayed"/>
    </isoform>
    <isoform>
        <id>Q147U1-3</id>
        <name>2</name>
        <sequence type="described" ref="VSP_033362 VSP_033363"/>
    </isoform>
</comment>
<comment type="similarity">
    <text evidence="5">Belongs to the krueppel C2H2-type zinc-finger protein family.</text>
</comment>
<dbReference type="EMBL" id="AK097652">
    <property type="protein sequence ID" value="BAG53503.1"/>
    <property type="molecule type" value="mRNA"/>
</dbReference>
<dbReference type="EMBL" id="AK289536">
    <property type="protein sequence ID" value="BAF82225.1"/>
    <property type="molecule type" value="mRNA"/>
</dbReference>
<dbReference type="EMBL" id="AC008752">
    <property type="status" value="NOT_ANNOTATED_CDS"/>
    <property type="molecule type" value="Genomic_DNA"/>
</dbReference>
<dbReference type="EMBL" id="BC118576">
    <property type="protein sequence ID" value="AAI18577.2"/>
    <property type="molecule type" value="mRNA"/>
</dbReference>
<dbReference type="CCDS" id="CCDS42496.1">
    <molecule id="Q147U1-1"/>
</dbReference>
<dbReference type="CCDS" id="CCDS92508.1">
    <molecule id="Q147U1-3"/>
</dbReference>
<dbReference type="RefSeq" id="NP_001071092.1">
    <molecule id="Q147U1-1"/>
    <property type="nucleotide sequence ID" value="NM_001077624.3"/>
</dbReference>
<dbReference type="RefSeq" id="NP_001382768.1">
    <molecule id="Q147U1-3"/>
    <property type="nucleotide sequence ID" value="NM_001395839.1"/>
</dbReference>
<dbReference type="RefSeq" id="NP_001382769.1">
    <molecule id="Q147U1-3"/>
    <property type="nucleotide sequence ID" value="NM_001395840.1"/>
</dbReference>
<dbReference type="RefSeq" id="NP_001382770.1">
    <molecule id="Q147U1-3"/>
    <property type="nucleotide sequence ID" value="NM_001395841.1"/>
</dbReference>
<dbReference type="RefSeq" id="NP_001382771.1">
    <molecule id="Q147U1-3"/>
    <property type="nucleotide sequence ID" value="NM_001395842.1"/>
</dbReference>
<dbReference type="RefSeq" id="NP_001382772.1">
    <molecule id="Q147U1-3"/>
    <property type="nucleotide sequence ID" value="NM_001395843.1"/>
</dbReference>
<dbReference type="RefSeq" id="XP_005259829.1">
    <property type="nucleotide sequence ID" value="XM_005259772.3"/>
</dbReference>
<dbReference type="RefSeq" id="XP_011526019.1">
    <property type="nucleotide sequence ID" value="XM_011527717.2"/>
</dbReference>
<dbReference type="SMR" id="Q147U1"/>
<dbReference type="BioGRID" id="127839">
    <property type="interactions" value="6"/>
</dbReference>
<dbReference type="FunCoup" id="Q147U1">
    <property type="interactions" value="91"/>
</dbReference>
<dbReference type="IntAct" id="Q147U1">
    <property type="interactions" value="13"/>
</dbReference>
<dbReference type="STRING" id="9606.ENSP00000380999"/>
<dbReference type="iPTMnet" id="Q147U1"/>
<dbReference type="PhosphoSitePlus" id="Q147U1"/>
<dbReference type="BioMuta" id="ZNF846"/>
<dbReference type="DMDM" id="187671939"/>
<dbReference type="jPOST" id="Q147U1"/>
<dbReference type="MassIVE" id="Q147U1"/>
<dbReference type="PaxDb" id="9606-ENSP00000380999"/>
<dbReference type="PeptideAtlas" id="Q147U1"/>
<dbReference type="ProteomicsDB" id="60181">
    <molecule id="Q147U1-1"/>
</dbReference>
<dbReference type="Pumba" id="Q147U1"/>
<dbReference type="Antibodypedia" id="25081">
    <property type="antibodies" value="46 antibodies from 16 providers"/>
</dbReference>
<dbReference type="DNASU" id="162993"/>
<dbReference type="Ensembl" id="ENST00000397902.7">
    <molecule id="Q147U1-1"/>
    <property type="protein sequence ID" value="ENSP00000380999.1"/>
    <property type="gene ID" value="ENSG00000196605.7"/>
</dbReference>
<dbReference type="Ensembl" id="ENST00000588267.5">
    <molecule id="Q147U1-3"/>
    <property type="protein sequence ID" value="ENSP00000465467.1"/>
    <property type="gene ID" value="ENSG00000196605.7"/>
</dbReference>
<dbReference type="Ensembl" id="ENST00000592859.1">
    <molecule id="Q147U1-3"/>
    <property type="protein sequence ID" value="ENSP00000467891.1"/>
    <property type="gene ID" value="ENSG00000196605.7"/>
</dbReference>
<dbReference type="GeneID" id="162993"/>
<dbReference type="KEGG" id="hsa:162993"/>
<dbReference type="MANE-Select" id="ENST00000397902.7">
    <property type="protein sequence ID" value="ENSP00000380999.1"/>
    <property type="RefSeq nucleotide sequence ID" value="NM_001077624.3"/>
    <property type="RefSeq protein sequence ID" value="NP_001071092.1"/>
</dbReference>
<dbReference type="UCSC" id="uc002mmb.2">
    <molecule id="Q147U1-1"/>
    <property type="organism name" value="human"/>
</dbReference>
<dbReference type="AGR" id="HGNC:27260"/>
<dbReference type="CTD" id="162993"/>
<dbReference type="GeneCards" id="ZNF846"/>
<dbReference type="HGNC" id="HGNC:27260">
    <property type="gene designation" value="ZNF846"/>
</dbReference>
<dbReference type="HPA" id="ENSG00000196605">
    <property type="expression patterns" value="Low tissue specificity"/>
</dbReference>
<dbReference type="neXtProt" id="NX_Q147U1"/>
<dbReference type="OpenTargets" id="ENSG00000196605"/>
<dbReference type="PharmGKB" id="PA162410876"/>
<dbReference type="VEuPathDB" id="HostDB:ENSG00000196605"/>
<dbReference type="eggNOG" id="KOG1721">
    <property type="taxonomic scope" value="Eukaryota"/>
</dbReference>
<dbReference type="GeneTree" id="ENSGT00940000163958"/>
<dbReference type="HOGENOM" id="CLU_002678_2_1_1"/>
<dbReference type="InParanoid" id="Q147U1"/>
<dbReference type="OMA" id="ECKDCQR"/>
<dbReference type="OrthoDB" id="427030at2759"/>
<dbReference type="PAN-GO" id="Q147U1">
    <property type="GO annotations" value="3 GO annotations based on evolutionary models"/>
</dbReference>
<dbReference type="PhylomeDB" id="Q147U1"/>
<dbReference type="TreeFam" id="TF341817"/>
<dbReference type="PathwayCommons" id="Q147U1"/>
<dbReference type="SignaLink" id="Q147U1"/>
<dbReference type="BioGRID-ORCS" id="162993">
    <property type="hits" value="8 hits in 1176 CRISPR screens"/>
</dbReference>
<dbReference type="ChiTaRS" id="ZNF846">
    <property type="organism name" value="human"/>
</dbReference>
<dbReference type="GenomeRNAi" id="162993"/>
<dbReference type="Pharos" id="Q147U1">
    <property type="development level" value="Tdark"/>
</dbReference>
<dbReference type="PRO" id="PR:Q147U1"/>
<dbReference type="Proteomes" id="UP000005640">
    <property type="component" value="Chromosome 19"/>
</dbReference>
<dbReference type="RNAct" id="Q147U1">
    <property type="molecule type" value="protein"/>
</dbReference>
<dbReference type="Bgee" id="ENSG00000196605">
    <property type="expression patterns" value="Expressed in left testis and 144 other cell types or tissues"/>
</dbReference>
<dbReference type="ExpressionAtlas" id="Q147U1">
    <property type="expression patterns" value="baseline and differential"/>
</dbReference>
<dbReference type="GO" id="GO:0005634">
    <property type="term" value="C:nucleus"/>
    <property type="evidence" value="ECO:0000318"/>
    <property type="project" value="GO_Central"/>
</dbReference>
<dbReference type="GO" id="GO:0000981">
    <property type="term" value="F:DNA-binding transcription factor activity, RNA polymerase II-specific"/>
    <property type="evidence" value="ECO:0000318"/>
    <property type="project" value="GO_Central"/>
</dbReference>
<dbReference type="GO" id="GO:0000977">
    <property type="term" value="F:RNA polymerase II transcription regulatory region sequence-specific DNA binding"/>
    <property type="evidence" value="ECO:0000318"/>
    <property type="project" value="GO_Central"/>
</dbReference>
<dbReference type="GO" id="GO:0008270">
    <property type="term" value="F:zinc ion binding"/>
    <property type="evidence" value="ECO:0007669"/>
    <property type="project" value="UniProtKB-KW"/>
</dbReference>
<dbReference type="GO" id="GO:0006357">
    <property type="term" value="P:regulation of transcription by RNA polymerase II"/>
    <property type="evidence" value="ECO:0000318"/>
    <property type="project" value="GO_Central"/>
</dbReference>
<dbReference type="CDD" id="cd07765">
    <property type="entry name" value="KRAB_A-box"/>
    <property type="match status" value="1"/>
</dbReference>
<dbReference type="FunFam" id="3.30.160.60:FF:000184">
    <property type="entry name" value="Zinc finger protein 333"/>
    <property type="match status" value="1"/>
</dbReference>
<dbReference type="FunFam" id="3.30.160.60:FF:000579">
    <property type="entry name" value="Zinc finger protein 354B"/>
    <property type="match status" value="1"/>
</dbReference>
<dbReference type="FunFam" id="3.30.160.60:FF:000338">
    <property type="entry name" value="zinc finger protein 383"/>
    <property type="match status" value="5"/>
</dbReference>
<dbReference type="FunFam" id="3.30.160.60:FF:002254">
    <property type="entry name" value="Zinc finger protein 540"/>
    <property type="match status" value="3"/>
</dbReference>
<dbReference type="FunFam" id="3.30.160.60:FF:000737">
    <property type="entry name" value="Zinc finger protein 565"/>
    <property type="match status" value="1"/>
</dbReference>
<dbReference type="Gene3D" id="6.10.140.140">
    <property type="match status" value="1"/>
</dbReference>
<dbReference type="Gene3D" id="3.30.160.60">
    <property type="entry name" value="Classic Zinc Finger"/>
    <property type="match status" value="12"/>
</dbReference>
<dbReference type="InterPro" id="IPR050752">
    <property type="entry name" value="C2H2-ZF_domain"/>
</dbReference>
<dbReference type="InterPro" id="IPR001909">
    <property type="entry name" value="KRAB"/>
</dbReference>
<dbReference type="InterPro" id="IPR036051">
    <property type="entry name" value="KRAB_dom_sf"/>
</dbReference>
<dbReference type="InterPro" id="IPR036236">
    <property type="entry name" value="Znf_C2H2_sf"/>
</dbReference>
<dbReference type="InterPro" id="IPR013087">
    <property type="entry name" value="Znf_C2H2_type"/>
</dbReference>
<dbReference type="PANTHER" id="PTHR24384">
    <property type="entry name" value="FINGER PUTATIVE TRANSCRIPTION FACTOR FAMILY-RELATED"/>
    <property type="match status" value="1"/>
</dbReference>
<dbReference type="PANTHER" id="PTHR24384:SF218">
    <property type="entry name" value="ZINC FINGER PROTEIN 502"/>
    <property type="match status" value="1"/>
</dbReference>
<dbReference type="Pfam" id="PF01352">
    <property type="entry name" value="KRAB"/>
    <property type="match status" value="1"/>
</dbReference>
<dbReference type="Pfam" id="PF00096">
    <property type="entry name" value="zf-C2H2"/>
    <property type="match status" value="7"/>
</dbReference>
<dbReference type="Pfam" id="PF13465">
    <property type="entry name" value="zf-H2C2_2"/>
    <property type="match status" value="3"/>
</dbReference>
<dbReference type="SMART" id="SM00349">
    <property type="entry name" value="KRAB"/>
    <property type="match status" value="1"/>
</dbReference>
<dbReference type="SMART" id="SM00614">
    <property type="entry name" value="ZnF_BED"/>
    <property type="match status" value="3"/>
</dbReference>
<dbReference type="SMART" id="SM00355">
    <property type="entry name" value="ZnF_C2H2"/>
    <property type="match status" value="12"/>
</dbReference>
<dbReference type="SUPFAM" id="SSF57667">
    <property type="entry name" value="beta-beta-alpha zinc fingers"/>
    <property type="match status" value="8"/>
</dbReference>
<dbReference type="SUPFAM" id="SSF109640">
    <property type="entry name" value="KRAB domain (Kruppel-associated box)"/>
    <property type="match status" value="1"/>
</dbReference>
<dbReference type="PROSITE" id="PS50805">
    <property type="entry name" value="KRAB"/>
    <property type="match status" value="1"/>
</dbReference>
<dbReference type="PROSITE" id="PS00028">
    <property type="entry name" value="ZINC_FINGER_C2H2_1"/>
    <property type="match status" value="11"/>
</dbReference>
<dbReference type="PROSITE" id="PS50157">
    <property type="entry name" value="ZINC_FINGER_C2H2_2"/>
    <property type="match status" value="12"/>
</dbReference>
<proteinExistence type="evidence at protein level"/>
<organism>
    <name type="scientific">Homo sapiens</name>
    <name type="common">Human</name>
    <dbReference type="NCBI Taxonomy" id="9606"/>
    <lineage>
        <taxon>Eukaryota</taxon>
        <taxon>Metazoa</taxon>
        <taxon>Chordata</taxon>
        <taxon>Craniata</taxon>
        <taxon>Vertebrata</taxon>
        <taxon>Euteleostomi</taxon>
        <taxon>Mammalia</taxon>
        <taxon>Eutheria</taxon>
        <taxon>Euarchontoglires</taxon>
        <taxon>Primates</taxon>
        <taxon>Haplorrhini</taxon>
        <taxon>Catarrhini</taxon>
        <taxon>Hominidae</taxon>
        <taxon>Homo</taxon>
    </lineage>
</organism>